<accession>P23616</accession>
<organism>
    <name type="scientific">Brevibacillus brevis</name>
    <name type="common">Bacillus brevis</name>
    <dbReference type="NCBI Taxonomy" id="1393"/>
    <lineage>
        <taxon>Bacteria</taxon>
        <taxon>Bacillati</taxon>
        <taxon>Bacillota</taxon>
        <taxon>Bacilli</taxon>
        <taxon>Bacillales</taxon>
        <taxon>Paenibacillaceae</taxon>
        <taxon>Brevibacillus</taxon>
    </lineage>
</organism>
<sequence length="285" mass="31586">MKKNIITSITSLALVAGLSLTAFAATTATVPAPPAKQESKPAVAANPAPKNVLFQYSTINALMLGQFEGDLTLKDLKLRGDMGLGTINDLDGEMIQMGTKFYQIDSTGKLSELPESVKTPFAVTTHFEPKEKTTLTNVQDYNQLTKMLEEKFENKNVFYAVKLTGTFKMVKARTVPKQTRPYPQLTEVTKKQSEFEFKNVKGTLIGFYTPNYAAALNVPGFHLHFITEDKTSGGHVLNLQFDNANLEISPIHEFDVQLPHTDDFAHSDLTQVTTSQVHQAESERK</sequence>
<keyword id="KW-0002">3D-structure</keyword>
<keyword id="KW-0005">Acetoin biosynthesis</keyword>
<keyword id="KW-0210">Decarboxylase</keyword>
<keyword id="KW-0903">Direct protein sequencing</keyword>
<keyword id="KW-0456">Lyase</keyword>
<keyword id="KW-0732">Signal</keyword>
<protein>
    <recommendedName>
        <fullName>Alpha-acetolactate decarboxylase</fullName>
        <shortName>ALDC</shortName>
        <ecNumber>4.1.1.5</ecNumber>
    </recommendedName>
</protein>
<evidence type="ECO:0000305" key="1"/>
<evidence type="ECO:0007829" key="2">
    <source>
        <dbReference type="PDB" id="4BT2"/>
    </source>
</evidence>
<evidence type="ECO:0007829" key="3">
    <source>
        <dbReference type="PDB" id="4BT3"/>
    </source>
</evidence>
<name>ALDC_BREBE</name>
<feature type="signal peptide">
    <location>
        <begin position="1"/>
        <end position="25"/>
    </location>
</feature>
<feature type="chain" id="PRO_0000001109" description="Alpha-acetolactate decarboxylase">
    <location>
        <begin position="26"/>
        <end position="285"/>
    </location>
</feature>
<feature type="sequence variant" description="In some forms.">
    <location>
        <begin position="26"/>
        <end position="28"/>
    </location>
</feature>
<feature type="strand" evidence="2">
    <location>
        <begin position="53"/>
        <end position="57"/>
    </location>
</feature>
<feature type="helix" evidence="2">
    <location>
        <begin position="59"/>
        <end position="63"/>
    </location>
</feature>
<feature type="helix" evidence="2">
    <location>
        <begin position="73"/>
        <end position="76"/>
    </location>
</feature>
<feature type="helix" evidence="2">
    <location>
        <begin position="77"/>
        <end position="79"/>
    </location>
</feature>
<feature type="strand" evidence="2">
    <location>
        <begin position="81"/>
        <end position="85"/>
    </location>
</feature>
<feature type="helix" evidence="2">
    <location>
        <begin position="88"/>
        <end position="90"/>
    </location>
</feature>
<feature type="strand" evidence="2">
    <location>
        <begin position="92"/>
        <end position="97"/>
    </location>
</feature>
<feature type="strand" evidence="2">
    <location>
        <begin position="100"/>
        <end position="104"/>
    </location>
</feature>
<feature type="strand" evidence="2">
    <location>
        <begin position="110"/>
        <end position="112"/>
    </location>
</feature>
<feature type="strand" evidence="2">
    <location>
        <begin position="118"/>
        <end position="124"/>
    </location>
</feature>
<feature type="strand" evidence="2">
    <location>
        <begin position="130"/>
        <end position="138"/>
    </location>
</feature>
<feature type="helix" evidence="2">
    <location>
        <begin position="141"/>
        <end position="152"/>
    </location>
</feature>
<feature type="strand" evidence="2">
    <location>
        <begin position="157"/>
        <end position="174"/>
    </location>
</feature>
<feature type="helix" evidence="2">
    <location>
        <begin position="185"/>
        <end position="189"/>
    </location>
</feature>
<feature type="strand" evidence="2">
    <location>
        <begin position="193"/>
        <end position="209"/>
    </location>
</feature>
<feature type="helix" evidence="2">
    <location>
        <begin position="211"/>
        <end position="213"/>
    </location>
</feature>
<feature type="turn" evidence="2">
    <location>
        <begin position="214"/>
        <end position="216"/>
    </location>
</feature>
<feature type="strand" evidence="2">
    <location>
        <begin position="219"/>
        <end position="227"/>
    </location>
</feature>
<feature type="strand" evidence="2">
    <location>
        <begin position="233"/>
        <end position="251"/>
    </location>
</feature>
<feature type="strand" evidence="2">
    <location>
        <begin position="254"/>
        <end position="257"/>
    </location>
</feature>
<feature type="helix" evidence="2">
    <location>
        <begin position="262"/>
        <end position="266"/>
    </location>
</feature>
<feature type="helix" evidence="3">
    <location>
        <begin position="269"/>
        <end position="271"/>
    </location>
</feature>
<feature type="helix" evidence="2">
    <location>
        <begin position="274"/>
        <end position="281"/>
    </location>
</feature>
<reference key="1">
    <citation type="journal article" date="1990" name="J. Bacteriol.">
        <title>Cloning of aldB, which encodes alpha-acetolactate decarboxylase, an exoenzyme from Bacillus brevis.</title>
        <authorList>
            <person name="Diderichsen B."/>
            <person name="Wedsted U."/>
            <person name="Hedegaard L."/>
            <person name="Jensen B.R."/>
            <person name="Sjoeholm C."/>
        </authorList>
    </citation>
    <scope>NUCLEOTIDE SEQUENCE [GENOMIC DNA]</scope>
    <scope>PARTIAL PROTEIN SEQUENCE</scope>
    <source>
        <strain>ATCC 11031 / LMG 17054 / NRS 799</strain>
    </source>
</reference>
<dbReference type="EC" id="4.1.1.5"/>
<dbReference type="PIR" id="A37757">
    <property type="entry name" value="A37757"/>
</dbReference>
<dbReference type="PDB" id="4BT2">
    <property type="method" value="X-ray"/>
    <property type="resolution" value="1.10 A"/>
    <property type="chains" value="A=29-285"/>
</dbReference>
<dbReference type="PDB" id="4BT3">
    <property type="method" value="X-ray"/>
    <property type="resolution" value="1.10 A"/>
    <property type="chains" value="A=29-285"/>
</dbReference>
<dbReference type="PDB" id="4BT4">
    <property type="method" value="X-ray"/>
    <property type="resolution" value="1.60 A"/>
    <property type="chains" value="A=29-285"/>
</dbReference>
<dbReference type="PDB" id="4BT5">
    <property type="method" value="X-ray"/>
    <property type="resolution" value="1.10 A"/>
    <property type="chains" value="A=29-285"/>
</dbReference>
<dbReference type="PDB" id="4BT6">
    <property type="method" value="X-ray"/>
    <property type="resolution" value="1.60 A"/>
    <property type="chains" value="A=29-285"/>
</dbReference>
<dbReference type="PDB" id="4BT7">
    <property type="method" value="X-ray"/>
    <property type="resolution" value="1.10 A"/>
    <property type="chains" value="A=29-285"/>
</dbReference>
<dbReference type="PDBsum" id="4BT2"/>
<dbReference type="PDBsum" id="4BT3"/>
<dbReference type="PDBsum" id="4BT4"/>
<dbReference type="PDBsum" id="4BT5"/>
<dbReference type="PDBsum" id="4BT6"/>
<dbReference type="PDBsum" id="4BT7"/>
<dbReference type="SMR" id="P23616"/>
<dbReference type="BRENDA" id="4.1.1.5">
    <property type="organism ID" value="638"/>
</dbReference>
<dbReference type="UniPathway" id="UPA00626">
    <property type="reaction ID" value="UER00678"/>
</dbReference>
<dbReference type="EvolutionaryTrace" id="P23616"/>
<dbReference type="GO" id="GO:0047605">
    <property type="term" value="F:acetolactate decarboxylase activity"/>
    <property type="evidence" value="ECO:0007669"/>
    <property type="project" value="UniProtKB-EC"/>
</dbReference>
<dbReference type="GO" id="GO:0045151">
    <property type="term" value="P:acetoin biosynthetic process"/>
    <property type="evidence" value="ECO:0007669"/>
    <property type="project" value="UniProtKB-KW"/>
</dbReference>
<dbReference type="CDD" id="cd17299">
    <property type="entry name" value="acetolactate_decarboxylase"/>
    <property type="match status" value="1"/>
</dbReference>
<dbReference type="Gene3D" id="3.30.1330.80">
    <property type="entry name" value="Hypothetical protein, similar to alpha- acetolactate decarboxylase, domain 2"/>
    <property type="match status" value="2"/>
</dbReference>
<dbReference type="InterPro" id="IPR005128">
    <property type="entry name" value="Acetolactate_a_deCO2ase"/>
</dbReference>
<dbReference type="NCBIfam" id="TIGR01252">
    <property type="entry name" value="acetolac_decarb"/>
    <property type="match status" value="1"/>
</dbReference>
<dbReference type="PANTHER" id="PTHR35524">
    <property type="entry name" value="ALPHA-ACETOLACTATE DECARBOXYLASE"/>
    <property type="match status" value="1"/>
</dbReference>
<dbReference type="PANTHER" id="PTHR35524:SF1">
    <property type="entry name" value="ALPHA-ACETOLACTATE DECARBOXYLASE"/>
    <property type="match status" value="1"/>
</dbReference>
<dbReference type="Pfam" id="PF03306">
    <property type="entry name" value="AAL_decarboxy"/>
    <property type="match status" value="1"/>
</dbReference>
<dbReference type="PIRSF" id="PIRSF001332">
    <property type="entry name" value="Acetolac_decarb"/>
    <property type="match status" value="1"/>
</dbReference>
<dbReference type="SUPFAM" id="SSF117856">
    <property type="entry name" value="AF0104/ALDC/Ptd012-like"/>
    <property type="match status" value="1"/>
</dbReference>
<comment type="function">
    <text>Converts acetolactate into acetoin, which can be excreted by the cells. This may be a mechanism for controlling the internal pH of cells in the stationary stage.</text>
</comment>
<comment type="catalytic activity">
    <reaction>
        <text>(2S)-2-acetolactate + H(+) = (R)-acetoin + CO2</text>
        <dbReference type="Rhea" id="RHEA:21580"/>
        <dbReference type="ChEBI" id="CHEBI:15378"/>
        <dbReference type="ChEBI" id="CHEBI:15686"/>
        <dbReference type="ChEBI" id="CHEBI:16526"/>
        <dbReference type="ChEBI" id="CHEBI:58476"/>
        <dbReference type="EC" id="4.1.1.5"/>
    </reaction>
</comment>
<comment type="pathway">
    <text>Polyol metabolism; (R,R)-butane-2,3-diol biosynthesis; (R,R)-butane-2,3-diol from pyruvate: step 2/3.</text>
</comment>
<comment type="similarity">
    <text evidence="1">Belongs to the alpha-acetolactate decarboxylase family.</text>
</comment>
<proteinExistence type="evidence at protein level"/>
<gene>
    <name type="primary">aldB</name>
</gene>